<dbReference type="EMBL" id="CP001197">
    <property type="protein sequence ID" value="ACL07059.1"/>
    <property type="molecule type" value="Genomic_DNA"/>
</dbReference>
<dbReference type="SMR" id="B8DNK2"/>
<dbReference type="STRING" id="883.DvMF_0098"/>
<dbReference type="KEGG" id="dvm:DvMF_0098"/>
<dbReference type="eggNOG" id="COG0200">
    <property type="taxonomic scope" value="Bacteria"/>
</dbReference>
<dbReference type="HOGENOM" id="CLU_055188_4_2_7"/>
<dbReference type="OrthoDB" id="9810293at2"/>
<dbReference type="GO" id="GO:0022625">
    <property type="term" value="C:cytosolic large ribosomal subunit"/>
    <property type="evidence" value="ECO:0007669"/>
    <property type="project" value="TreeGrafter"/>
</dbReference>
<dbReference type="GO" id="GO:0019843">
    <property type="term" value="F:rRNA binding"/>
    <property type="evidence" value="ECO:0007669"/>
    <property type="project" value="UniProtKB-UniRule"/>
</dbReference>
<dbReference type="GO" id="GO:0003735">
    <property type="term" value="F:structural constituent of ribosome"/>
    <property type="evidence" value="ECO:0007669"/>
    <property type="project" value="InterPro"/>
</dbReference>
<dbReference type="GO" id="GO:0006412">
    <property type="term" value="P:translation"/>
    <property type="evidence" value="ECO:0007669"/>
    <property type="project" value="UniProtKB-UniRule"/>
</dbReference>
<dbReference type="Gene3D" id="3.100.10.10">
    <property type="match status" value="1"/>
</dbReference>
<dbReference type="HAMAP" id="MF_01341">
    <property type="entry name" value="Ribosomal_uL15"/>
    <property type="match status" value="1"/>
</dbReference>
<dbReference type="InterPro" id="IPR030878">
    <property type="entry name" value="Ribosomal_uL15"/>
</dbReference>
<dbReference type="InterPro" id="IPR021131">
    <property type="entry name" value="Ribosomal_uL15/eL18"/>
</dbReference>
<dbReference type="InterPro" id="IPR036227">
    <property type="entry name" value="Ribosomal_uL15/eL18_sf"/>
</dbReference>
<dbReference type="InterPro" id="IPR005749">
    <property type="entry name" value="Ribosomal_uL15_bac-type"/>
</dbReference>
<dbReference type="InterPro" id="IPR001196">
    <property type="entry name" value="Ribosomal_uL15_CS"/>
</dbReference>
<dbReference type="NCBIfam" id="TIGR01071">
    <property type="entry name" value="rplO_bact"/>
    <property type="match status" value="1"/>
</dbReference>
<dbReference type="PANTHER" id="PTHR12934">
    <property type="entry name" value="50S RIBOSOMAL PROTEIN L15"/>
    <property type="match status" value="1"/>
</dbReference>
<dbReference type="PANTHER" id="PTHR12934:SF11">
    <property type="entry name" value="LARGE RIBOSOMAL SUBUNIT PROTEIN UL15M"/>
    <property type="match status" value="1"/>
</dbReference>
<dbReference type="Pfam" id="PF00828">
    <property type="entry name" value="Ribosomal_L27A"/>
    <property type="match status" value="1"/>
</dbReference>
<dbReference type="SUPFAM" id="SSF52080">
    <property type="entry name" value="Ribosomal proteins L15p and L18e"/>
    <property type="match status" value="1"/>
</dbReference>
<dbReference type="PROSITE" id="PS00475">
    <property type="entry name" value="RIBOSOMAL_L15"/>
    <property type="match status" value="1"/>
</dbReference>
<feature type="chain" id="PRO_1000142809" description="Large ribosomal subunit protein uL15">
    <location>
        <begin position="1"/>
        <end position="149"/>
    </location>
</feature>
<feature type="region of interest" description="Disordered" evidence="2">
    <location>
        <begin position="14"/>
        <end position="63"/>
    </location>
</feature>
<feature type="compositionally biased region" description="Gly residues" evidence="2">
    <location>
        <begin position="21"/>
        <end position="35"/>
    </location>
</feature>
<feature type="compositionally biased region" description="Gly residues" evidence="2">
    <location>
        <begin position="42"/>
        <end position="52"/>
    </location>
</feature>
<reference key="1">
    <citation type="submission" date="2008-10" db="EMBL/GenBank/DDBJ databases">
        <title>Complete sequence of Desulfovibrio vulgaris str. 'Miyazaki F'.</title>
        <authorList>
            <person name="Lucas S."/>
            <person name="Copeland A."/>
            <person name="Lapidus A."/>
            <person name="Glavina del Rio T."/>
            <person name="Dalin E."/>
            <person name="Tice H."/>
            <person name="Bruce D."/>
            <person name="Goodwin L."/>
            <person name="Pitluck S."/>
            <person name="Sims D."/>
            <person name="Brettin T."/>
            <person name="Detter J.C."/>
            <person name="Han C."/>
            <person name="Larimer F."/>
            <person name="Land M."/>
            <person name="Hauser L."/>
            <person name="Kyrpides N."/>
            <person name="Mikhailova N."/>
            <person name="Hazen T.C."/>
            <person name="Richardson P."/>
        </authorList>
    </citation>
    <scope>NUCLEOTIDE SEQUENCE [LARGE SCALE GENOMIC DNA]</scope>
    <source>
        <strain>DSM 19637 / Miyazaki F</strain>
    </source>
</reference>
<organism>
    <name type="scientific">Nitratidesulfovibrio vulgaris (strain DSM 19637 / Miyazaki F)</name>
    <name type="common">Desulfovibrio vulgaris</name>
    <dbReference type="NCBI Taxonomy" id="883"/>
    <lineage>
        <taxon>Bacteria</taxon>
        <taxon>Pseudomonadati</taxon>
        <taxon>Thermodesulfobacteriota</taxon>
        <taxon>Desulfovibrionia</taxon>
        <taxon>Desulfovibrionales</taxon>
        <taxon>Desulfovibrionaceae</taxon>
        <taxon>Nitratidesulfovibrio</taxon>
    </lineage>
</organism>
<sequence length="149" mass="15734">MRLHELYPFAEERASRKRVGRGSGSGLGCTSGKGNKGQNARAGGGVRPGFEGGQMPLQRRLPKRGFKNAPFKATYEVINLDRLVASFEGKTDITLEDIYARGLCKAGASVKILGVGEVSVALTVEAHKFSASAAEKIRNAGGEAKALEG</sequence>
<name>RL15_NITV9</name>
<keyword id="KW-0687">Ribonucleoprotein</keyword>
<keyword id="KW-0689">Ribosomal protein</keyword>
<keyword id="KW-0694">RNA-binding</keyword>
<keyword id="KW-0699">rRNA-binding</keyword>
<accession>B8DNK2</accession>
<comment type="function">
    <text evidence="1">Binds to the 23S rRNA.</text>
</comment>
<comment type="subunit">
    <text evidence="1">Part of the 50S ribosomal subunit.</text>
</comment>
<comment type="similarity">
    <text evidence="1">Belongs to the universal ribosomal protein uL15 family.</text>
</comment>
<proteinExistence type="inferred from homology"/>
<gene>
    <name evidence="1" type="primary">rplO</name>
    <name type="ordered locus">DvMF_0098</name>
</gene>
<protein>
    <recommendedName>
        <fullName evidence="1">Large ribosomal subunit protein uL15</fullName>
    </recommendedName>
    <alternativeName>
        <fullName evidence="3">50S ribosomal protein L15</fullName>
    </alternativeName>
</protein>
<evidence type="ECO:0000255" key="1">
    <source>
        <dbReference type="HAMAP-Rule" id="MF_01341"/>
    </source>
</evidence>
<evidence type="ECO:0000256" key="2">
    <source>
        <dbReference type="SAM" id="MobiDB-lite"/>
    </source>
</evidence>
<evidence type="ECO:0000305" key="3"/>